<evidence type="ECO:0000250" key="1">
    <source>
        <dbReference type="UniProtKB" id="A0A0K0MCJ4"/>
    </source>
</evidence>
<evidence type="ECO:0000255" key="2"/>
<evidence type="ECO:0000255" key="3">
    <source>
        <dbReference type="PROSITE-ProRule" id="PRU00258"/>
    </source>
</evidence>
<evidence type="ECO:0000255" key="4">
    <source>
        <dbReference type="PROSITE-ProRule" id="PRU01348"/>
    </source>
</evidence>
<evidence type="ECO:0000255" key="5">
    <source>
        <dbReference type="PROSITE-ProRule" id="PRU01363"/>
    </source>
</evidence>
<evidence type="ECO:0000269" key="6">
    <source>
    </source>
</evidence>
<evidence type="ECO:0000303" key="7">
    <source>
    </source>
</evidence>
<evidence type="ECO:0000305" key="8">
    <source>
    </source>
</evidence>
<proteinExistence type="evidence at protein level"/>
<organism>
    <name type="scientific">Emericella nidulans (strain FGSC A4 / ATCC 38163 / CBS 112.46 / NRRL 194 / M139)</name>
    <name type="common">Aspergillus nidulans</name>
    <dbReference type="NCBI Taxonomy" id="227321"/>
    <lineage>
        <taxon>Eukaryota</taxon>
        <taxon>Fungi</taxon>
        <taxon>Dikarya</taxon>
        <taxon>Ascomycota</taxon>
        <taxon>Pezizomycotina</taxon>
        <taxon>Eurotiomycetes</taxon>
        <taxon>Eurotiomycetidae</taxon>
        <taxon>Eurotiales</taxon>
        <taxon>Aspergillaceae</taxon>
        <taxon>Aspergillus</taxon>
        <taxon>Aspergillus subgen. Nidulantes</taxon>
    </lineage>
</organism>
<feature type="chain" id="PRO_0000450877" description="Highly reducing polyketide synthase pkhB">
    <location>
        <begin position="1"/>
        <end position="2544"/>
    </location>
</feature>
<feature type="domain" description="Ketosynthase family 3 (KS3)" evidence="4">
    <location>
        <begin position="9"/>
        <end position="438"/>
    </location>
</feature>
<feature type="domain" description="PKS/mFAS DH" evidence="5">
    <location>
        <begin position="948"/>
        <end position="1254"/>
    </location>
</feature>
<feature type="domain" description="Carrier" evidence="3">
    <location>
        <begin position="2462"/>
        <end position="2539"/>
    </location>
</feature>
<feature type="region of interest" description="Malonyl-CoA:ACP transacylase (MAT) domain" evidence="2">
    <location>
        <begin position="566"/>
        <end position="876"/>
    </location>
</feature>
<feature type="region of interest" description="Dehydratase (DH) domain" evidence="2">
    <location>
        <begin position="948"/>
        <end position="1252"/>
    </location>
</feature>
<feature type="region of interest" description="N-terminal hotdog fold" evidence="5">
    <location>
        <begin position="948"/>
        <end position="1082"/>
    </location>
</feature>
<feature type="region of interest" description="C-terminal hotdog fold" evidence="5">
    <location>
        <begin position="1095"/>
        <end position="1254"/>
    </location>
</feature>
<feature type="region of interest" description="Methyltransferase (CMet) domain" evidence="2">
    <location>
        <begin position="1398"/>
        <end position="1573"/>
    </location>
</feature>
<feature type="region of interest" description="Enoyl reductase (ER) domain" evidence="2">
    <location>
        <begin position="1826"/>
        <end position="2142"/>
    </location>
</feature>
<feature type="region of interest" description="Ketoreductase (KR) domain" evidence="2">
    <location>
        <begin position="2169"/>
        <end position="2356"/>
    </location>
</feature>
<feature type="active site" description="For beta-ketoacyl synthase activity" evidence="4">
    <location>
        <position position="182"/>
    </location>
</feature>
<feature type="active site" description="For beta-ketoacyl synthase activity" evidence="4">
    <location>
        <position position="317"/>
    </location>
</feature>
<feature type="active site" description="For beta-ketoacyl synthase activity" evidence="4">
    <location>
        <position position="358"/>
    </location>
</feature>
<feature type="active site" description="Proton acceptor; for dehydratase activity" evidence="5">
    <location>
        <position position="980"/>
    </location>
</feature>
<feature type="active site" description="Proton donor; for dehydratase activity" evidence="5">
    <location>
        <position position="1165"/>
    </location>
</feature>
<feature type="modified residue" description="O-(pantetheine 4'-phosphoryl)serine" evidence="3">
    <location>
        <position position="2499"/>
    </location>
</feature>
<comment type="function">
    <text evidence="6">Highly reducing polyketide synthase; part of the pkh gene cluster that mediates the biosynthesis of 2,4-dihydroxy-6-[(3E,5E,7E)-2-oxonona-3,5,7-trienyl]benzaldehyde (PubMed:22510154). The highly reducing polyketide synthase pkhB first produces the (2E,4E,6E)-octa-2,4,6-trienyl strater unit for the non-reducing polyketide synthase pkhA (PubMed:22510154). This octatrienoyl starter is then loaded onto the SAT domain of the NR-PKS pkhA to be condensed with 4 malonyl-CoA units to yield 2,4-dihydroxy-6-[(3E,5E,7E)-2-oxonona-3,5,7-trienyl]benzaldehyde (PubMed:22510154).</text>
</comment>
<comment type="cofactor">
    <cofactor evidence="1">
        <name>pantetheine 4'-phosphate</name>
        <dbReference type="ChEBI" id="CHEBI:47942"/>
    </cofactor>
    <text evidence="2">Binds 1 phosphopantetheine covalently.</text>
</comment>
<comment type="pathway">
    <text evidence="6">Secondary metabolite biosynthesis.</text>
</comment>
<comment type="domain">
    <text evidence="8">Multidomain protein; including a ketosynthase (KS) that catalyzes repeated decarboxylative condensation to elongate the polyketide backbone; a malonyl-CoA:ACP transacylase (MAT) that selects and transfers the extender unit malonyl-CoA; a dehydratase (DH) domain that reduces hydroxyl groups to enoyl groups; a methyltransferase (CMeT) domain responsible for the incorporation of methyl groups; an enoylreductase (ER) domain that reduces enoyl groups to alkyl group; a ketoreductase (KR) domain that catalyzes beta-ketoreduction steps; and an acyl-carrier protein (ACP) that serves as the tether of the growing and completed polyketide via its phosphopantetheinyl arm.</text>
</comment>
<keyword id="KW-0012">Acyltransferase</keyword>
<keyword id="KW-0489">Methyltransferase</keyword>
<keyword id="KW-0511">Multifunctional enzyme</keyword>
<keyword id="KW-0521">NADP</keyword>
<keyword id="KW-0560">Oxidoreductase</keyword>
<keyword id="KW-0596">Phosphopantetheine</keyword>
<keyword id="KW-0597">Phosphoprotein</keyword>
<keyword id="KW-1185">Reference proteome</keyword>
<keyword id="KW-0808">Transferase</keyword>
<name>PKHB_EMENI</name>
<accession>Q5BBP5</accession>
<accession>C8VLG3</accession>
<reference key="1">
    <citation type="journal article" date="2005" name="Nature">
        <title>Sequencing of Aspergillus nidulans and comparative analysis with A. fumigatus and A. oryzae.</title>
        <authorList>
            <person name="Galagan J.E."/>
            <person name="Calvo S.E."/>
            <person name="Cuomo C."/>
            <person name="Ma L.-J."/>
            <person name="Wortman J.R."/>
            <person name="Batzoglou S."/>
            <person name="Lee S.-I."/>
            <person name="Bastuerkmen M."/>
            <person name="Spevak C.C."/>
            <person name="Clutterbuck J."/>
            <person name="Kapitonov V."/>
            <person name="Jurka J."/>
            <person name="Scazzocchio C."/>
            <person name="Farman M.L."/>
            <person name="Butler J."/>
            <person name="Purcell S."/>
            <person name="Harris S."/>
            <person name="Braus G.H."/>
            <person name="Draht O."/>
            <person name="Busch S."/>
            <person name="D'Enfert C."/>
            <person name="Bouchier C."/>
            <person name="Goldman G.H."/>
            <person name="Bell-Pedersen D."/>
            <person name="Griffiths-Jones S."/>
            <person name="Doonan J.H."/>
            <person name="Yu J."/>
            <person name="Vienken K."/>
            <person name="Pain A."/>
            <person name="Freitag M."/>
            <person name="Selker E.U."/>
            <person name="Archer D.B."/>
            <person name="Penalva M.A."/>
            <person name="Oakley B.R."/>
            <person name="Momany M."/>
            <person name="Tanaka T."/>
            <person name="Kumagai T."/>
            <person name="Asai K."/>
            <person name="Machida M."/>
            <person name="Nierman W.C."/>
            <person name="Denning D.W."/>
            <person name="Caddick M.X."/>
            <person name="Hynes M."/>
            <person name="Paoletti M."/>
            <person name="Fischer R."/>
            <person name="Miller B.L."/>
            <person name="Dyer P.S."/>
            <person name="Sachs M.S."/>
            <person name="Osmani S.A."/>
            <person name="Birren B.W."/>
        </authorList>
    </citation>
    <scope>NUCLEOTIDE SEQUENCE [LARGE SCALE GENOMIC DNA]</scope>
    <source>
        <strain>FGSC A4 / ATCC 38163 / CBS 112.46 / NRRL 194 / M139</strain>
    </source>
</reference>
<reference key="2">
    <citation type="journal article" date="2009" name="Fungal Genet. Biol.">
        <title>The 2008 update of the Aspergillus nidulans genome annotation: a community effort.</title>
        <authorList>
            <person name="Wortman J.R."/>
            <person name="Gilsenan J.M."/>
            <person name="Joardar V."/>
            <person name="Deegan J."/>
            <person name="Clutterbuck J."/>
            <person name="Andersen M.R."/>
            <person name="Archer D."/>
            <person name="Bencina M."/>
            <person name="Braus G."/>
            <person name="Coutinho P."/>
            <person name="von Dohren H."/>
            <person name="Doonan J."/>
            <person name="Driessen A.J."/>
            <person name="Durek P."/>
            <person name="Espeso E."/>
            <person name="Fekete E."/>
            <person name="Flipphi M."/>
            <person name="Estrada C.G."/>
            <person name="Geysens S."/>
            <person name="Goldman G."/>
            <person name="de Groot P.W."/>
            <person name="Hansen K."/>
            <person name="Harris S.D."/>
            <person name="Heinekamp T."/>
            <person name="Helmstaedt K."/>
            <person name="Henrissat B."/>
            <person name="Hofmann G."/>
            <person name="Homan T."/>
            <person name="Horio T."/>
            <person name="Horiuchi H."/>
            <person name="James S."/>
            <person name="Jones M."/>
            <person name="Karaffa L."/>
            <person name="Karanyi Z."/>
            <person name="Kato M."/>
            <person name="Keller N."/>
            <person name="Kelly D.E."/>
            <person name="Kiel J.A."/>
            <person name="Kim J.M."/>
            <person name="van der Klei I.J."/>
            <person name="Klis F.M."/>
            <person name="Kovalchuk A."/>
            <person name="Krasevec N."/>
            <person name="Kubicek C.P."/>
            <person name="Liu B."/>
            <person name="Maccabe A."/>
            <person name="Meyer V."/>
            <person name="Mirabito P."/>
            <person name="Miskei M."/>
            <person name="Mos M."/>
            <person name="Mullins J."/>
            <person name="Nelson D.R."/>
            <person name="Nielsen J."/>
            <person name="Oakley B.R."/>
            <person name="Osmani S.A."/>
            <person name="Pakula T."/>
            <person name="Paszewski A."/>
            <person name="Paulsen I."/>
            <person name="Pilsyk S."/>
            <person name="Pocsi I."/>
            <person name="Punt P.J."/>
            <person name="Ram A.F."/>
            <person name="Ren Q."/>
            <person name="Robellet X."/>
            <person name="Robson G."/>
            <person name="Seiboth B."/>
            <person name="van Solingen P."/>
            <person name="Specht T."/>
            <person name="Sun J."/>
            <person name="Taheri-Talesh N."/>
            <person name="Takeshita N."/>
            <person name="Ussery D."/>
            <person name="vanKuyk P.A."/>
            <person name="Visser H."/>
            <person name="van de Vondervoort P.J."/>
            <person name="de Vries R.P."/>
            <person name="Walton J."/>
            <person name="Xiang X."/>
            <person name="Xiong Y."/>
            <person name="Zeng A.P."/>
            <person name="Brandt B.W."/>
            <person name="Cornell M.J."/>
            <person name="van den Hondel C.A."/>
            <person name="Visser J."/>
            <person name="Oliver S.G."/>
            <person name="Turner G."/>
        </authorList>
    </citation>
    <scope>GENOME REANNOTATION</scope>
    <source>
        <strain>FGSC A4 / ATCC 38163 / CBS 112.46 / NRRL 194 / M139</strain>
    </source>
</reference>
<reference key="3">
    <citation type="journal article" date="2012" name="J. Am. Chem. Soc.">
        <title>Illuminating the diversity of aromatic polyketide synthases in Aspergillus nidulans.</title>
        <authorList>
            <person name="Ahuja M."/>
            <person name="Chiang Y.M."/>
            <person name="Chang S.L."/>
            <person name="Praseuth M.B."/>
            <person name="Entwistle R."/>
            <person name="Sanchez J.F."/>
            <person name="Lo H.C."/>
            <person name="Yeh H.H."/>
            <person name="Oakley B.R."/>
            <person name="Wang C.C."/>
        </authorList>
    </citation>
    <scope>DOMAIN</scope>
    <scope>FUNCTION</scope>
    <scope>CATALYTIC ACTIVITY</scope>
    <scope>PATHWAY</scope>
</reference>
<protein>
    <recommendedName>
        <fullName evidence="7">Highly reducing polyketide synthase pkhB</fullName>
        <shortName evidence="7">HR-PKS pkhB</shortName>
        <ecNumber evidence="6">2.3.1.-</ecNumber>
    </recommendedName>
    <alternativeName>
        <fullName evidence="7">Pkh biosynthesis cluster protein B</fullName>
    </alternativeName>
</protein>
<gene>
    <name evidence="7" type="primary">pkhB</name>
    <name type="ORF">ANIA_02035</name>
</gene>
<sequence>MDTDSEWASEPIAIIGMSCKFSGGASNPDKLWDLMASGKTGWSEIPEERFNLKGVYHANHERTSTTHVKGGHFLDEDVAVFDAAFFNYSAEMAQVVDPQFRLQLESAYEALENAGLPLSRVLGSQTSVFAGVFAHDYQEGIIRDEDRLPRFNVVGTWSPMSSNRISHFFDFRGASMTLETGCSTTLVALHQAVQTLRNREADMSVVTGANVMLNPDTFKAIGSLGMLSPDGRSYSFDSRANGYGRGEGVATIIIKRLSDALAANDPIRAVIRETAVNQDGKTDTITTPSGAAQVDLMRECYSRAGLDPRGTQYFEAHGTGTPTGDPIEAQAMATIFSEGRDDKNHYLRIGSVKTNVGHTEAVSGLAAVIKGVLCLEKGLIPPTVNYEMPNPKLKLNEWRLKVVRTIEHWPDSLIDGPCRMSINNFGYGGTNAHVILESADPWTLTPDLDFELVNGKGLKGNGDASDDVSDAKVLILSARDERGCQQMVSDLKGYLEKHKPLDRKASKQLLQNLSYTLCERRTLFQWVATHQVRLDSGALDSVIQGLDSPCFKPTRRASESPRIGMVFTGQVFRRSIEEAETYLNALGADWSLLEELQRDKKTTKVHETKISIPICVALQIALVRLLESWGITASGVASHSSGEISAAFAVGALTHHQAIAIAYFRAIIVADGTQRAPGSAKGAMAAIGLGVGTVQPYLDRLTEGKAVVACVNSPQSVTISGDEDAIDEITDLCKQDGVFARRLKVQQAYHSHHMDPFADTYRERLRIEMDRSVVKGDKQKLKAVFSSAVTGGRITDIKEIASPDHWVGSLIRPVEFVDALTELVLGDPDDPTGRSVDVLLEVGPHTALGGPIREILSLSEFGGIELPYWGCLVRDEHAGDSMRSAAINLFREGQSLAMDKINFPVPAYDGEGPQVLTNLPSYPWNHTMRHWQESRVNRAIRERGQPPHELLGMPVAGNDPSASVWRRVLRVTETPWLRDHMVQGSIVYPGAGYICLAIEAVRQLTDQDKSVSGLRLRDINFLFALVIPDNADGVEIRTTLQSVPEREIGAQGWWRFEVSSVTLENRWTLHATGMVGIEESAVLETERRRRPLSIYTRQPNPQDLFANLRAHSVYHGPLFQNTNRIIQDGREPRSICDITIRHEASSDTDPEVAAQNSLLHPITLDAVFVAFYSALPSVGALQEEPKLPRSVRAMWISSNISHQIGHTLQCDTSLLNDDPQRGRADITVFDGKTDATVLKIQGVELAALGRGSSASTSTEVCSRVVWEPDLSFRNPLAFEQIKKHLASTNSDQEADVVRDLQRLCIAYASDALRELTPGDVAGLQEQPHLAKYYAFLRGLVNKTTEEPGKPQQSMESVDEKVVCRLGPLLPSILRGERSVEEVRSLMDEYNTNSRRQLSSLRQLSALLQTIAHKSPGARVLQIGSSTGALATRRILETLDTNLVASWHITEPSSELLDNARAQLADWADLLQFEQLDIEQSPFKKKFIPESYDVVVSLHALHAIKNPASALGNVRTLLKPGGTLLLVETTKNQVDVDFVFALRPGWLQDKNPLTSWDAVLQDGGFSGLDLEIYDSESDIHTNSVIMSTVPAKDQKADLSKVKDSFAVVSSIKTPPSSPIVDQLCQRIQALTGTATTHLVLEKTSGNTYKDKICVFIGELDRPILADLDAVQMEGLRAMVTQCSGLLWVTTGGTVEREAPERAVHQGFLRVLRNEYISRYFISLDLDPAHADAGAAGWSSGANPAVSAIVQALEEGFGHGSTRTGPAEFEYAERNGVLHIPRYYKDEKYNNMVTCPLAPSWSDHDERSIPLERLFQDRQLRLQVGIPGHLGTLAFAENEANHADLPPELMEITPRAHGACSRDVMAAMGQLKDQAMGFECAGIIARLGSEAYSKGYRVGDRVMALSAGASFASNVCVPWHGVIQMPKDMDFVSAASLPLAFTVAYFGLVRSASLTTGQSVLIHAAAGAFGQAAIMLAKHLGVTEIYATVGSPEKQDILEREYGIPSERIFSSRDASFAPAILAATKGRGVDLVLSSLSGPLLQESLSTVAPLGYLVNIGKADIERNSLMALESFSRGISFVSMDVPTLLQRRGPDVHRTLGEITSLVEQQVLKPVYPVTVYPMQDVQAAFRFVQTGDQMGKVVLSAGSDEQVYVVPRPKGLTTQSQLRPDASYLIVGGVGGIGRSVAHWLVAHGAQHLILLSRSAGNLDLDQNKNSDGAFFINELRHMGCRVKPVSCDVSLASSLTVALRACEDDGFPPVRGVIQGAMLLRDAIFEQMTLDDWRSGLSPKLYGTWNLHTEFSQPDSLDFFIMLSSVSGVAGIASQSNYAAGGSYEDAMARWRQSQGLPGVAIDLGPISDIGYVSTDPRVAERLRKDGEFAMLDEGIVLRALNAAILHPLGRSQIIIGLTSSPGPHWDPNGRSQLGRDARYATLRPHTKVSARQDGESTSASLATQLADTNDPQEGARLIGAAIAEKLADIFMTPIAEIDLSKPPAHYGVDSLIAVELRNMLALQAAADISIFNILQTASLAALAGLVAEKSRHFQA</sequence>
<dbReference type="EC" id="2.3.1.-" evidence="6"/>
<dbReference type="EMBL" id="BN001307">
    <property type="protein sequence ID" value="CBF86052.1"/>
    <property type="molecule type" value="Genomic_DNA"/>
</dbReference>
<dbReference type="RefSeq" id="XP_659639.1">
    <property type="nucleotide sequence ID" value="XM_654547.1"/>
</dbReference>
<dbReference type="SMR" id="Q5BBP5"/>
<dbReference type="STRING" id="227321.Q5BBP5"/>
<dbReference type="EnsemblFungi" id="CBF86052">
    <property type="protein sequence ID" value="CBF86052"/>
    <property type="gene ID" value="ANIA_02035"/>
</dbReference>
<dbReference type="GeneID" id="2874642"/>
<dbReference type="KEGG" id="ani:ANIA_02035"/>
<dbReference type="eggNOG" id="KOG1202">
    <property type="taxonomic scope" value="Eukaryota"/>
</dbReference>
<dbReference type="HOGENOM" id="CLU_000022_31_0_1"/>
<dbReference type="InParanoid" id="Q5BBP5"/>
<dbReference type="OMA" id="SWHITEP"/>
<dbReference type="OrthoDB" id="329835at2759"/>
<dbReference type="Proteomes" id="UP000000560">
    <property type="component" value="Chromosome VII"/>
</dbReference>
<dbReference type="GO" id="GO:0004312">
    <property type="term" value="F:fatty acid synthase activity"/>
    <property type="evidence" value="ECO:0000318"/>
    <property type="project" value="GO_Central"/>
</dbReference>
<dbReference type="GO" id="GO:0008168">
    <property type="term" value="F:methyltransferase activity"/>
    <property type="evidence" value="ECO:0007669"/>
    <property type="project" value="UniProtKB-KW"/>
</dbReference>
<dbReference type="GO" id="GO:0016491">
    <property type="term" value="F:oxidoreductase activity"/>
    <property type="evidence" value="ECO:0007669"/>
    <property type="project" value="UniProtKB-KW"/>
</dbReference>
<dbReference type="GO" id="GO:0031177">
    <property type="term" value="F:phosphopantetheine binding"/>
    <property type="evidence" value="ECO:0007669"/>
    <property type="project" value="InterPro"/>
</dbReference>
<dbReference type="GO" id="GO:0006633">
    <property type="term" value="P:fatty acid biosynthetic process"/>
    <property type="evidence" value="ECO:0000318"/>
    <property type="project" value="GO_Central"/>
</dbReference>
<dbReference type="GO" id="GO:0032259">
    <property type="term" value="P:methylation"/>
    <property type="evidence" value="ECO:0007669"/>
    <property type="project" value="UniProtKB-KW"/>
</dbReference>
<dbReference type="GO" id="GO:0030639">
    <property type="term" value="P:polyketide biosynthetic process"/>
    <property type="evidence" value="ECO:0007669"/>
    <property type="project" value="UniProtKB-ARBA"/>
</dbReference>
<dbReference type="GO" id="GO:0044550">
    <property type="term" value="P:secondary metabolite biosynthetic process"/>
    <property type="evidence" value="ECO:0000318"/>
    <property type="project" value="GO_Central"/>
</dbReference>
<dbReference type="CDD" id="cd02440">
    <property type="entry name" value="AdoMet_MTases"/>
    <property type="match status" value="1"/>
</dbReference>
<dbReference type="CDD" id="cd05195">
    <property type="entry name" value="enoyl_red"/>
    <property type="match status" value="1"/>
</dbReference>
<dbReference type="CDD" id="cd00833">
    <property type="entry name" value="PKS"/>
    <property type="match status" value="1"/>
</dbReference>
<dbReference type="Gene3D" id="3.40.47.10">
    <property type="match status" value="1"/>
</dbReference>
<dbReference type="Gene3D" id="1.10.1200.10">
    <property type="entry name" value="ACP-like"/>
    <property type="match status" value="1"/>
</dbReference>
<dbReference type="Gene3D" id="3.40.366.10">
    <property type="entry name" value="Malonyl-Coenzyme A Acyl Carrier Protein, domain 2"/>
    <property type="match status" value="1"/>
</dbReference>
<dbReference type="Gene3D" id="3.90.180.10">
    <property type="entry name" value="Medium-chain alcohol dehydrogenases, catalytic domain"/>
    <property type="match status" value="1"/>
</dbReference>
<dbReference type="Gene3D" id="3.40.50.720">
    <property type="entry name" value="NAD(P)-binding Rossmann-like Domain"/>
    <property type="match status" value="1"/>
</dbReference>
<dbReference type="Gene3D" id="3.10.129.110">
    <property type="entry name" value="Polyketide synthase dehydratase"/>
    <property type="match status" value="1"/>
</dbReference>
<dbReference type="Gene3D" id="3.40.50.150">
    <property type="entry name" value="Vaccinia Virus protein VP39"/>
    <property type="match status" value="1"/>
</dbReference>
<dbReference type="InterPro" id="IPR001227">
    <property type="entry name" value="Ac_transferase_dom_sf"/>
</dbReference>
<dbReference type="InterPro" id="IPR036736">
    <property type="entry name" value="ACP-like_sf"/>
</dbReference>
<dbReference type="InterPro" id="IPR014043">
    <property type="entry name" value="Acyl_transferase_dom"/>
</dbReference>
<dbReference type="InterPro" id="IPR016035">
    <property type="entry name" value="Acyl_Trfase/lysoPLipase"/>
</dbReference>
<dbReference type="InterPro" id="IPR013154">
    <property type="entry name" value="ADH-like_N"/>
</dbReference>
<dbReference type="InterPro" id="IPR011032">
    <property type="entry name" value="GroES-like_sf"/>
</dbReference>
<dbReference type="InterPro" id="IPR014031">
    <property type="entry name" value="Ketoacyl_synth_C"/>
</dbReference>
<dbReference type="InterPro" id="IPR014030">
    <property type="entry name" value="Ketoacyl_synth_N"/>
</dbReference>
<dbReference type="InterPro" id="IPR016036">
    <property type="entry name" value="Malonyl_transacylase_ACP-bd"/>
</dbReference>
<dbReference type="InterPro" id="IPR013217">
    <property type="entry name" value="Methyltransf_12"/>
</dbReference>
<dbReference type="InterPro" id="IPR036291">
    <property type="entry name" value="NAD(P)-bd_dom_sf"/>
</dbReference>
<dbReference type="InterPro" id="IPR056501">
    <property type="entry name" value="NAD-bd_HRPKS_sdrA"/>
</dbReference>
<dbReference type="InterPro" id="IPR032821">
    <property type="entry name" value="PKS_assoc"/>
</dbReference>
<dbReference type="InterPro" id="IPR020841">
    <property type="entry name" value="PKS_Beta-ketoAc_synthase_dom"/>
</dbReference>
<dbReference type="InterPro" id="IPR042104">
    <property type="entry name" value="PKS_dehydratase_sf"/>
</dbReference>
<dbReference type="InterPro" id="IPR020807">
    <property type="entry name" value="PKS_DH"/>
</dbReference>
<dbReference type="InterPro" id="IPR049551">
    <property type="entry name" value="PKS_DH_C"/>
</dbReference>
<dbReference type="InterPro" id="IPR049552">
    <property type="entry name" value="PKS_DH_N"/>
</dbReference>
<dbReference type="InterPro" id="IPR020843">
    <property type="entry name" value="PKS_ER"/>
</dbReference>
<dbReference type="InterPro" id="IPR013968">
    <property type="entry name" value="PKS_KR"/>
</dbReference>
<dbReference type="InterPro" id="IPR049900">
    <property type="entry name" value="PKS_mFAS_DH"/>
</dbReference>
<dbReference type="InterPro" id="IPR050091">
    <property type="entry name" value="PKS_NRPS_Biosynth_Enz"/>
</dbReference>
<dbReference type="InterPro" id="IPR020806">
    <property type="entry name" value="PKS_PP-bd"/>
</dbReference>
<dbReference type="InterPro" id="IPR009081">
    <property type="entry name" value="PP-bd_ACP"/>
</dbReference>
<dbReference type="InterPro" id="IPR006162">
    <property type="entry name" value="Ppantetheine_attach_site"/>
</dbReference>
<dbReference type="InterPro" id="IPR029063">
    <property type="entry name" value="SAM-dependent_MTases_sf"/>
</dbReference>
<dbReference type="InterPro" id="IPR016039">
    <property type="entry name" value="Thiolase-like"/>
</dbReference>
<dbReference type="PANTHER" id="PTHR43775:SF29">
    <property type="entry name" value="ASPERFURANONE POLYKETIDE SYNTHASE AFOG-RELATED"/>
    <property type="match status" value="1"/>
</dbReference>
<dbReference type="PANTHER" id="PTHR43775">
    <property type="entry name" value="FATTY ACID SYNTHASE"/>
    <property type="match status" value="1"/>
</dbReference>
<dbReference type="Pfam" id="PF00698">
    <property type="entry name" value="Acyl_transf_1"/>
    <property type="match status" value="1"/>
</dbReference>
<dbReference type="Pfam" id="PF08240">
    <property type="entry name" value="ADH_N"/>
    <property type="match status" value="1"/>
</dbReference>
<dbReference type="Pfam" id="PF13602">
    <property type="entry name" value="ADH_zinc_N_2"/>
    <property type="match status" value="1"/>
</dbReference>
<dbReference type="Pfam" id="PF16197">
    <property type="entry name" value="KAsynt_C_assoc"/>
    <property type="match status" value="1"/>
</dbReference>
<dbReference type="Pfam" id="PF00109">
    <property type="entry name" value="ketoacyl-synt"/>
    <property type="match status" value="1"/>
</dbReference>
<dbReference type="Pfam" id="PF02801">
    <property type="entry name" value="Ketoacyl-synt_C"/>
    <property type="match status" value="1"/>
</dbReference>
<dbReference type="Pfam" id="PF08659">
    <property type="entry name" value="KR"/>
    <property type="match status" value="1"/>
</dbReference>
<dbReference type="Pfam" id="PF08242">
    <property type="entry name" value="Methyltransf_12"/>
    <property type="match status" value="1"/>
</dbReference>
<dbReference type="Pfam" id="PF23114">
    <property type="entry name" value="NAD-bd_HRPKS_sdrA"/>
    <property type="match status" value="1"/>
</dbReference>
<dbReference type="Pfam" id="PF21089">
    <property type="entry name" value="PKS_DH_N"/>
    <property type="match status" value="1"/>
</dbReference>
<dbReference type="Pfam" id="PF14765">
    <property type="entry name" value="PS-DH"/>
    <property type="match status" value="1"/>
</dbReference>
<dbReference type="SMART" id="SM00827">
    <property type="entry name" value="PKS_AT"/>
    <property type="match status" value="1"/>
</dbReference>
<dbReference type="SMART" id="SM00826">
    <property type="entry name" value="PKS_DH"/>
    <property type="match status" value="1"/>
</dbReference>
<dbReference type="SMART" id="SM00829">
    <property type="entry name" value="PKS_ER"/>
    <property type="match status" value="1"/>
</dbReference>
<dbReference type="SMART" id="SM00822">
    <property type="entry name" value="PKS_KR"/>
    <property type="match status" value="1"/>
</dbReference>
<dbReference type="SMART" id="SM00825">
    <property type="entry name" value="PKS_KS"/>
    <property type="match status" value="1"/>
</dbReference>
<dbReference type="SMART" id="SM00823">
    <property type="entry name" value="PKS_PP"/>
    <property type="match status" value="1"/>
</dbReference>
<dbReference type="SUPFAM" id="SSF47336">
    <property type="entry name" value="ACP-like"/>
    <property type="match status" value="1"/>
</dbReference>
<dbReference type="SUPFAM" id="SSF52151">
    <property type="entry name" value="FabD/lysophospholipase-like"/>
    <property type="match status" value="1"/>
</dbReference>
<dbReference type="SUPFAM" id="SSF50129">
    <property type="entry name" value="GroES-like"/>
    <property type="match status" value="1"/>
</dbReference>
<dbReference type="SUPFAM" id="SSF51735">
    <property type="entry name" value="NAD(P)-binding Rossmann-fold domains"/>
    <property type="match status" value="2"/>
</dbReference>
<dbReference type="SUPFAM" id="SSF55048">
    <property type="entry name" value="Probable ACP-binding domain of malonyl-CoA ACP transacylase"/>
    <property type="match status" value="1"/>
</dbReference>
<dbReference type="SUPFAM" id="SSF53335">
    <property type="entry name" value="S-adenosyl-L-methionine-dependent methyltransferases"/>
    <property type="match status" value="1"/>
</dbReference>
<dbReference type="SUPFAM" id="SSF53901">
    <property type="entry name" value="Thiolase-like"/>
    <property type="match status" value="1"/>
</dbReference>
<dbReference type="PROSITE" id="PS50075">
    <property type="entry name" value="CARRIER"/>
    <property type="match status" value="1"/>
</dbReference>
<dbReference type="PROSITE" id="PS52004">
    <property type="entry name" value="KS3_2"/>
    <property type="match status" value="1"/>
</dbReference>
<dbReference type="PROSITE" id="PS00012">
    <property type="entry name" value="PHOSPHOPANTETHEINE"/>
    <property type="match status" value="1"/>
</dbReference>
<dbReference type="PROSITE" id="PS52019">
    <property type="entry name" value="PKS_MFAS_DH"/>
    <property type="match status" value="1"/>
</dbReference>